<feature type="chain" id="PRO_0000221894" description="Preterminal protein" evidence="1">
    <location>
        <begin position="1"/>
        <end position="671"/>
    </location>
</feature>
<feature type="chain" id="PRO_0000433932" description="Intermediate terminal protein" evidence="1">
    <location>
        <begin position="176"/>
        <end position="671"/>
    </location>
</feature>
<feature type="chain" id="PRO_0000433933" description="Terminal protein" evidence="1">
    <location>
        <begin position="350"/>
        <end position="671"/>
    </location>
</feature>
<feature type="region of interest" description="Disordered" evidence="2">
    <location>
        <begin position="386"/>
        <end position="411"/>
    </location>
</feature>
<feature type="region of interest" description="Disordered" evidence="2">
    <location>
        <begin position="645"/>
        <end position="671"/>
    </location>
</feature>
<feature type="short sequence motif" description="Nuclear localization signal" evidence="1">
    <location>
        <begin position="380"/>
        <end position="389"/>
    </location>
</feature>
<feature type="compositionally biased region" description="Acidic residues" evidence="2">
    <location>
        <begin position="397"/>
        <end position="411"/>
    </location>
</feature>
<feature type="compositionally biased region" description="Pro residues" evidence="2">
    <location>
        <begin position="649"/>
        <end position="665"/>
    </location>
</feature>
<feature type="site" description="Cleavage; by adenovirus protease" evidence="1">
    <location>
        <begin position="175"/>
        <end position="176"/>
    </location>
</feature>
<feature type="site" description="Cleavage; by adenovirus protease" evidence="1">
    <location>
        <begin position="349"/>
        <end position="350"/>
    </location>
</feature>
<feature type="site" description="Priming of strand displacement replication by covalently linking the first nucleotide of the new DNA chain" evidence="1">
    <location>
        <position position="580"/>
    </location>
</feature>
<feature type="modified residue" description="O-(5'-phospho-DNA)-serine" evidence="1 8">
    <location>
        <position position="580"/>
    </location>
</feature>
<feature type="mutagenesis site" description="No effect on pTP initiation activity. No effect on DNA binding." evidence="7">
    <original>D</original>
    <variation>E</variation>
    <location>
        <position position="578"/>
    </location>
</feature>
<feature type="mutagenesis site" description="Decreased pTP initiation activity to 29% of wild-type activity. No effect on DNA binding." evidence="7">
    <original>D</original>
    <variation>N</variation>
    <location>
        <position position="578"/>
    </location>
</feature>
<feature type="mutagenesis site" description="Decreased pTP initiation activity to 7% of wild-type activity. No effect on DNA binding." evidence="7">
    <original>D</original>
    <variation>R</variation>
    <location>
        <position position="578"/>
    </location>
</feature>
<feature type="mutagenesis site" description="Decreased pTP initiation activity to 65% of wild-type activity. No effect on DNA binding." evidence="7">
    <original>D</original>
    <variation>E</variation>
    <variation>N</variation>
    <variation>R</variation>
    <location>
        <position position="582"/>
    </location>
</feature>
<feature type="mutagenesis site" description="Decreased pTP initiation activity to 85% of wild-type activity. No effect on DNA binding." evidence="7">
    <original>D</original>
    <variation>N</variation>
    <location>
        <position position="582"/>
    </location>
</feature>
<feature type="mutagenesis site" description="Complete loss of pTP initiation activity. No effect on DNA binding." evidence="7">
    <original>D</original>
    <variation>R</variation>
    <location>
        <position position="582"/>
    </location>
</feature>
<comment type="function">
    <text evidence="1 4 6 7 9 10">Protein covalently bound to the viral DNA that acts as a primer for viral genomic replication by DNA strand displacement. Assembles on the viral origin of replication in an initiation complex with viral polymerase, DBP, host NFIA and host POU2F1/OCT1. During initiation, the polymerase covalently couples the first dCTP with Ser-580 of pTP. The terminal protein stimulates the template activity over 20 fold compared to protein-free templates. Neo-synthesized viral genomes are linked to two preterminal proteins, one for each 5' end. These new genomes are encapsidated in the nucleus, and during capsid maturation by viral protease, preterminal protein is first cleaved into intermediary (iTP), then into mature TP. May play a role in host nuclear matrix localization of genomic DNA.</text>
</comment>
<comment type="subunit">
    <text evidence="1 3 4 5 7 11 13">Heterodimer with the polymerase; this heterodimer binds to bp 9 to 18 of the genome (PubMed:12134025, PubMed:15273278). Interacts with host POU2F1; POU2F1 binds to the auxiliary sequences in the inverted terminal repeats and tethers the pTP-POL heterodimer to the origin DNA thereby participating in the assembly of the pre-initiation complex (POL-TP-DBP-NFIA-POU2F1) (PubMed:10373599, PubMed:11847120, PubMed:12747549, PubMed:9013582).</text>
</comment>
<comment type="subcellular location">
    <subcellularLocation>
        <location evidence="1 9 10">Host nucleus matrix</location>
    </subcellularLocation>
</comment>
<comment type="PTM">
    <text evidence="1">Preterminal protein is used to replicate viral genome, upon genomic encapsidation it is processed first into iTP and finally into TP by adenovirus protease.</text>
</comment>
<comment type="similarity">
    <text evidence="1 12">Belongs to the adenoviridae terminal protein family.</text>
</comment>
<dbReference type="EMBL" id="X02996">
    <property type="status" value="NOT_ANNOTATED_CDS"/>
    <property type="molecule type" value="Genomic_DNA"/>
</dbReference>
<dbReference type="EMBL" id="M73260">
    <property type="status" value="NOT_ANNOTATED_CDS"/>
    <property type="molecule type" value="Genomic_DNA"/>
</dbReference>
<dbReference type="PIR" id="A03840">
    <property type="entry name" value="UZADP5"/>
</dbReference>
<dbReference type="RefSeq" id="AP_000203.1">
    <property type="nucleotide sequence ID" value="AC_000008.1"/>
</dbReference>
<dbReference type="DIP" id="DIP-44807N"/>
<dbReference type="IntAct" id="P04499">
    <property type="interactions" value="1"/>
</dbReference>
<dbReference type="Proteomes" id="UP000004992">
    <property type="component" value="Genome"/>
</dbReference>
<dbReference type="GO" id="GO:0044204">
    <property type="term" value="C:host cell nuclear matrix"/>
    <property type="evidence" value="ECO:0000314"/>
    <property type="project" value="UniProtKB"/>
</dbReference>
<dbReference type="GO" id="GO:0042025">
    <property type="term" value="C:host cell nucleus"/>
    <property type="evidence" value="ECO:0000314"/>
    <property type="project" value="UniProtKB"/>
</dbReference>
<dbReference type="GO" id="GO:0003677">
    <property type="term" value="F:DNA binding"/>
    <property type="evidence" value="ECO:0000314"/>
    <property type="project" value="UniProtKB"/>
</dbReference>
<dbReference type="GO" id="GO:0003690">
    <property type="term" value="F:double-stranded DNA binding"/>
    <property type="evidence" value="ECO:0000314"/>
    <property type="project" value="UniProtKB"/>
</dbReference>
<dbReference type="GO" id="GO:0003697">
    <property type="term" value="F:single-stranded DNA binding"/>
    <property type="evidence" value="ECO:0000314"/>
    <property type="project" value="UniProtKB"/>
</dbReference>
<dbReference type="GO" id="GO:0006260">
    <property type="term" value="P:DNA replication"/>
    <property type="evidence" value="ECO:0007669"/>
    <property type="project" value="UniProtKB-KW"/>
</dbReference>
<dbReference type="GO" id="GO:0039693">
    <property type="term" value="P:viral DNA genome replication"/>
    <property type="evidence" value="ECO:0000314"/>
    <property type="project" value="UniProtKB"/>
</dbReference>
<dbReference type="GO" id="GO:0039687">
    <property type="term" value="P:viral DNA strand displacement replication"/>
    <property type="evidence" value="ECO:0000314"/>
    <property type="project" value="UniProtKB"/>
</dbReference>
<dbReference type="HAMAP" id="MF_04061">
    <property type="entry name" value="ADV_TERM"/>
    <property type="match status" value="1"/>
</dbReference>
<dbReference type="InterPro" id="IPR003391">
    <property type="entry name" value="Adeno_preterminal"/>
</dbReference>
<dbReference type="Pfam" id="PF02459">
    <property type="entry name" value="Adeno_terminal"/>
    <property type="match status" value="1"/>
</dbReference>
<evidence type="ECO:0000255" key="1">
    <source>
        <dbReference type="HAMAP-Rule" id="MF_04061"/>
    </source>
</evidence>
<evidence type="ECO:0000256" key="2">
    <source>
        <dbReference type="SAM" id="MobiDB-lite"/>
    </source>
</evidence>
<evidence type="ECO:0000269" key="3">
    <source>
    </source>
</evidence>
<evidence type="ECO:0000269" key="4">
    <source>
    </source>
</evidence>
<evidence type="ECO:0000269" key="5">
    <source>
    </source>
</evidence>
<evidence type="ECO:0000269" key="6">
    <source>
    </source>
</evidence>
<evidence type="ECO:0000269" key="7">
    <source>
    </source>
</evidence>
<evidence type="ECO:0000269" key="8">
    <source>
    </source>
</evidence>
<evidence type="ECO:0000269" key="9">
    <source>
    </source>
</evidence>
<evidence type="ECO:0000269" key="10">
    <source>
    </source>
</evidence>
<evidence type="ECO:0000269" key="11">
    <source>
    </source>
</evidence>
<evidence type="ECO:0000305" key="12"/>
<evidence type="ECO:0000305" key="13">
    <source>
    </source>
</evidence>
<protein>
    <recommendedName>
        <fullName evidence="1">Preterminal protein</fullName>
        <shortName evidence="1">pTP</shortName>
    </recommendedName>
    <alternativeName>
        <fullName evidence="1">Bellett protein</fullName>
    </alternativeName>
    <alternativeName>
        <fullName evidence="1">Precursor terminal protein</fullName>
    </alternativeName>
    <component>
        <recommendedName>
            <fullName evidence="1">Intermediate terminal protein</fullName>
            <shortName evidence="1">iTP</shortName>
        </recommendedName>
    </component>
    <component>
        <recommendedName>
            <fullName evidence="1">Terminal protein</fullName>
            <shortName evidence="1">TP</shortName>
        </recommendedName>
    </component>
</protein>
<organism>
    <name type="scientific">Human adenovirus C serotype 5</name>
    <name type="common">HAdV-5</name>
    <name type="synonym">Human adenovirus 5</name>
    <dbReference type="NCBI Taxonomy" id="28285"/>
    <lineage>
        <taxon>Viruses</taxon>
        <taxon>Varidnaviria</taxon>
        <taxon>Bamfordvirae</taxon>
        <taxon>Preplasmiviricota</taxon>
        <taxon>Tectiliviricetes</taxon>
        <taxon>Rowavirales</taxon>
        <taxon>Adenoviridae</taxon>
        <taxon>Mastadenovirus</taxon>
        <taxon>Human mastadenovirus C</taxon>
    </lineage>
</organism>
<name>TERM_ADE05</name>
<keyword id="KW-0190">Covalent protein-DNA linkage</keyword>
<keyword id="KW-0235">DNA replication</keyword>
<keyword id="KW-0238">DNA-binding</keyword>
<keyword id="KW-1048">Host nucleus</keyword>
<keyword id="KW-0597">Phosphoprotein</keyword>
<keyword id="KW-1185">Reference proteome</keyword>
<keyword id="KW-1194">Viral DNA replication</keyword>
<accession>P04499</accession>
<organismHost>
    <name type="scientific">Homo sapiens</name>
    <name type="common">Human</name>
    <dbReference type="NCBI Taxonomy" id="9606"/>
</organismHost>
<gene>
    <name evidence="1" type="primary">PTP</name>
</gene>
<sequence length="671" mass="76500">MALSVNDCARLTGQSVPTMEHFLPLRNIWNRVRDFPRASTTAAGITWMSRYIYGYHRLMLEDLAPGAPATLRWPLYRQPPPHFLVGYQYLVRTCNDYVFDSRAYSRLRYTELSQPGHQTVNWSVMANCTYTINTGAYHRFVDMDDFQSTLTQVQQAILAERVVADLALLQPMRGFGVTRMGGRGRHLRPNSAAAAAIDARDAGQEEGEEEVPVERLMQDYYKDLRRCQNEAWGMADRLRIQQAGPKDMVLLSTIRRLKTAYFNYIISSTSARNNPDRRPLPPATVLSLPCDCDWLDAFLERFSDPVDADSLRSLGGGVPTQQLLRCIVSAVSLPHGSPPPTHNRDMTGGVFQLRPRENGRAVTETMRRRRGEMIERFVDRLPVRRRRRRVPPPPPPPEEEEGEALMEEEIEEEEEAPVAFEREVRDTVAELIRLLEEELTVSARNSQFFNFAVDFYEAMERLEALGDINESTLRRWVMYFFVAEHTATTLNYLFQRLRNYAVFARHVELNLAQVVMRARDAEGGVVYSRVWNEGGLNAFSQLMARISNDLAATVERAGRGDLQEEEIEQFMAEIAYQDNSGDVQEILRQAAVNDTEIDSVELSFRLKLTGPVVFTQRRQIQEINRRVVAFASNLRAQHQLLPARGADVPLPPLPAGPEPPLPPGARPRHRF</sequence>
<proteinExistence type="evidence at protein level"/>
<reference key="1">
    <citation type="journal article" date="1984" name="Gene">
        <title>The nucleotide sequence of fragment HindIII-C of human adenovirus type 5 DNA (map positions 17.1-31.7).</title>
        <authorList>
            <person name="Dekker B.M.M."/>
            <person name="van Ormondt H."/>
        </authorList>
    </citation>
    <scope>NUCLEOTIDE SEQUENCE [GENOMIC DNA]</scope>
</reference>
<reference key="2">
    <citation type="journal article" date="1992" name="Virology">
        <title>The sequence of the genome of adenovirus type 5 and its comparison with the genome of adenovirus type 2.</title>
        <authorList>
            <person name="Chroboczek J."/>
            <person name="Bieber F."/>
            <person name="Jacrot B."/>
        </authorList>
    </citation>
    <scope>NUCLEOTIDE SEQUENCE [LARGE SCALE GENOMIC DNA]</scope>
</reference>
<reference key="3">
    <citation type="journal article" date="1981" name="J. Mol. Biol.">
        <title>Structure of the linkage between adenovirus DNA and the 55,000 molecular weight terminal protein.</title>
        <authorList>
            <person name="Desiderio S.V."/>
            <person name="Kelly T.J. Jr."/>
        </authorList>
    </citation>
    <scope>COVALENT DNA LINKAGE AT SER-580</scope>
</reference>
<reference key="4">
    <citation type="journal article" date="1993" name="J. Virol.">
        <title>Adenovirus precursor to terminal protein interacts with the nuclear matrix in vivo and in vitro.</title>
        <authorList>
            <person name="Fredman J.N."/>
            <person name="Engler J.A."/>
        </authorList>
    </citation>
    <scope>FUNCTION</scope>
    <scope>SUBCELLULAR LOCATION</scope>
</reference>
<reference key="5">
    <citation type="journal article" date="1993" name="J. Virol.">
        <title>Analysis of the adenovirus type 5 terminal protein precursor and DNA polymerase by linker insertion mutagenesis.</title>
        <authorList>
            <person name="Roovers D.J."/>
            <person name="van der Lee F.M."/>
            <person name="van der Wees J."/>
            <person name="Sussenbach J.S."/>
        </authorList>
    </citation>
    <scope>FUNCTION</scope>
    <scope>SUBCELLULAR LOCATION</scope>
</reference>
<reference key="6">
    <citation type="journal article" date="1997" name="J. Biol. Chem.">
        <title>The Oct-1 POU homeodomain stabilizes the adenovirus preinitiation complex via a direct interaction with the priming protein and is displaced when the replication fork passes.</title>
        <authorList>
            <person name="van Leeuwen H.C."/>
            <person name="Rensen M."/>
            <person name="van der Vliet P.C."/>
        </authorList>
    </citation>
    <scope>INTERACTION WITH HOST POU2F1</scope>
</reference>
<reference key="7">
    <citation type="journal article" date="1999" name="Nucleic Acids Res.">
        <title>Characterisation of the adenovirus preterminal protein and its interaction with the POU homeodomain of NFIII (Oct-1).</title>
        <authorList>
            <person name="Botting C.H."/>
            <person name="Hay R.T."/>
        </authorList>
    </citation>
    <scope>INTERACTION WITH HOST POU2F1</scope>
</reference>
<reference key="8">
    <citation type="journal article" date="2002" name="EMBO J.">
        <title>Recruitment of the priming protein pTP and DNA binding occur by overlapping Oct-1 POU homeodomain surfaces.</title>
        <authorList>
            <person name="de Jong R.N."/>
            <person name="Mysiak M.E."/>
            <person name="Meijer L.A."/>
            <person name="van der Linden M."/>
            <person name="van der Vliet P.C."/>
        </authorList>
    </citation>
    <scope>FUNCTION</scope>
    <scope>INTERACTION WITH HOST POU2F1</scope>
</reference>
<reference key="9">
    <citation type="journal article" date="2002" name="J. Virol.">
        <title>Molecular architecture of adenovirus DNA polymerase and location of the protein primer.</title>
        <authorList>
            <person name="Brenkman A.B."/>
            <person name="Breure E.C."/>
            <person name="van der Vliet P.C."/>
        </authorList>
    </citation>
    <scope>INTERACTION WITH THE POLYMERASE</scope>
</reference>
<reference key="10">
    <citation type="journal article" date="2003" name="Curr. Top. Microbiol. Immunol.">
        <title>Adenovirus DNA replication.</title>
        <authorList>
            <person name="Liu H."/>
            <person name="Naismith J.H."/>
            <person name="Hay R.T."/>
        </authorList>
    </citation>
    <scope>FUNCTION</scope>
    <scope>IDENTIFICATION IN THE INITIATION COMPLEX</scope>
</reference>
<reference key="11">
    <citation type="journal article" date="2004" name="Nucleic Acids Res.">
        <title>The adenovirus priming protein pTP contributes to the kinetics of initiation of DNA replication.</title>
        <authorList>
            <person name="Mysiak M.E."/>
            <person name="Holthuizen P.E."/>
            <person name="van der Vliet P.C."/>
        </authorList>
    </citation>
    <scope>FUNCTION</scope>
    <scope>INTERACTION WITH THE POLYMERASE</scope>
    <scope>MUTAGENESIS OF ASP-578 AND ASP-582</scope>
</reference>